<name>IGHD_HUMAN</name>
<reference key="1">
    <citation type="journal article" date="1985" name="Science">
        <title>Human immunoglobulin D: genomic sequence of the delta heavy chain.</title>
        <authorList>
            <person name="White M.B."/>
            <person name="Shen A.L."/>
            <person name="Word C.J."/>
            <person name="Tucker P.W."/>
            <person name="Blattner F.R."/>
        </authorList>
    </citation>
    <scope>NUCLEOTIDE SEQUENCE [GENOMIC DNA] (IMGT ALLELE IGHD*01)</scope>
</reference>
<reference key="2">
    <citation type="journal article" date="1989" name="Int. Immunol.">
        <title>The human immunoglobulin C mu-C delta locus: complete nucleotide sequence and structural analysis.</title>
        <authorList>
            <person name="Word C.J."/>
            <person name="White M.B."/>
            <person name="Kuziel W.A."/>
            <person name="Shen A.L."/>
            <person name="Blattner F.R."/>
            <person name="Tucker P.W."/>
        </authorList>
    </citation>
    <scope>NUCLEOTIDE SEQUENCE [GENOMIC DNA] (IMGT ALLELE IGHD*02)</scope>
</reference>
<reference key="3">
    <citation type="journal article" date="2003" name="Nature">
        <title>The DNA sequence and analysis of human chromosome 14.</title>
        <authorList>
            <person name="Heilig R."/>
            <person name="Eckenberg R."/>
            <person name="Petit J.-L."/>
            <person name="Fonknechten N."/>
            <person name="Da Silva C."/>
            <person name="Cattolico L."/>
            <person name="Levy M."/>
            <person name="Barbe V."/>
            <person name="De Berardinis V."/>
            <person name="Ureta-Vidal A."/>
            <person name="Pelletier E."/>
            <person name="Vico V."/>
            <person name="Anthouard V."/>
            <person name="Rowen L."/>
            <person name="Madan A."/>
            <person name="Qin S."/>
            <person name="Sun H."/>
            <person name="Du H."/>
            <person name="Pepin K."/>
            <person name="Artiguenave F."/>
            <person name="Robert C."/>
            <person name="Cruaud C."/>
            <person name="Bruels T."/>
            <person name="Jaillon O."/>
            <person name="Friedlander L."/>
            <person name="Samson G."/>
            <person name="Brottier P."/>
            <person name="Cure S."/>
            <person name="Segurens B."/>
            <person name="Aniere F."/>
            <person name="Samain S."/>
            <person name="Crespeau H."/>
            <person name="Abbasi N."/>
            <person name="Aiach N."/>
            <person name="Boscus D."/>
            <person name="Dickhoff R."/>
            <person name="Dors M."/>
            <person name="Dubois I."/>
            <person name="Friedman C."/>
            <person name="Gouyvenoux M."/>
            <person name="James R."/>
            <person name="Madan A."/>
            <person name="Mairey-Estrada B."/>
            <person name="Mangenot S."/>
            <person name="Martins N."/>
            <person name="Menard M."/>
            <person name="Oztas S."/>
            <person name="Ratcliffe A."/>
            <person name="Shaffer T."/>
            <person name="Trask B."/>
            <person name="Vacherie B."/>
            <person name="Bellemere C."/>
            <person name="Belser C."/>
            <person name="Besnard-Gonnet M."/>
            <person name="Bartol-Mavel D."/>
            <person name="Boutard M."/>
            <person name="Briez-Silla S."/>
            <person name="Combette S."/>
            <person name="Dufosse-Laurent V."/>
            <person name="Ferron C."/>
            <person name="Lechaplais C."/>
            <person name="Louesse C."/>
            <person name="Muselet D."/>
            <person name="Magdelenat G."/>
            <person name="Pateau E."/>
            <person name="Petit E."/>
            <person name="Sirvain-Trukniewicz P."/>
            <person name="Trybou A."/>
            <person name="Vega-Czarny N."/>
            <person name="Bataille E."/>
            <person name="Bluet E."/>
            <person name="Bordelais I."/>
            <person name="Dubois M."/>
            <person name="Dumont C."/>
            <person name="Guerin T."/>
            <person name="Haffray S."/>
            <person name="Hammadi R."/>
            <person name="Muanga J."/>
            <person name="Pellouin V."/>
            <person name="Robert D."/>
            <person name="Wunderle E."/>
            <person name="Gauguet G."/>
            <person name="Roy A."/>
            <person name="Sainte-Marthe L."/>
            <person name="Verdier J."/>
            <person name="Verdier-Discala C."/>
            <person name="Hillier L.W."/>
            <person name="Fulton L."/>
            <person name="McPherson J."/>
            <person name="Matsuda F."/>
            <person name="Wilson R."/>
            <person name="Scarpelli C."/>
            <person name="Gyapay G."/>
            <person name="Wincker P."/>
            <person name="Saurin W."/>
            <person name="Quetier F."/>
            <person name="Waterston R."/>
            <person name="Hood L."/>
            <person name="Weissenbach J."/>
        </authorList>
    </citation>
    <scope>NUCLEOTIDE SEQUENCE [LARGE SCALE GENOMIC DNA] (IMGT ALLELE IGHD*02)</scope>
</reference>
<reference key="4">
    <citation type="journal article" date="2004" name="Genome Res.">
        <title>The status, quality, and expansion of the NIH full-length cDNA project: the Mammalian Gene Collection (MGC).</title>
        <authorList>
            <consortium name="The MGC Project Team"/>
        </authorList>
    </citation>
    <scope>NUCLEOTIDE SEQUENCE [LARGE SCALE MRNA] (ISOFORM 2)</scope>
    <source>
        <tissue>B-cell</tissue>
    </source>
</reference>
<reference key="5">
    <citation type="journal article" date="1981" name="Proc. Natl. Acad. Sci. U.S.A.">
        <title>Amino acid sequence of the first constant region domain and the hinge region of the delta heavy chain of human IgD.</title>
        <authorList>
            <person name="Putnam F.W."/>
            <person name="Takahashi N."/>
            <person name="Tetaert D."/>
            <person name="Debuire B."/>
            <person name="Lin L.-C."/>
        </authorList>
    </citation>
    <scope>PROTEIN SEQUENCE OF 1-162</scope>
    <scope>DISULFIDE BONDS</scope>
</reference>
<reference key="6">
    <citation type="journal article" date="1982" name="Biochem. Biophys. Res. Commun.">
        <title>Amino acid sequence of galactosamine-containing glycopeptides in the hinge region of a human immunoglobulin D.</title>
        <authorList>
            <person name="Takayasu T."/>
            <person name="Suzuki S."/>
            <person name="Kametani F."/>
            <person name="Takahashi N."/>
            <person name="Shinoda T."/>
            <person name="Okuyama T."/>
            <person name="Munekata E."/>
        </authorList>
    </citation>
    <scope>PROTEIN SEQUENCE OF 103-137</scope>
    <scope>GLYCOSYLATION AT SER-109; SER-110; THR-113; THR-126; THR-127; THR-131 AND THR-132</scope>
</reference>
<reference key="7">
    <citation type="journal article" date="1981" name="Proc. Natl. Acad. Sci. U.S.A.">
        <title>Primary structure of the Fc region of human immunoglobulin D: implications for evolutionary origin and biological function.</title>
        <authorList>
            <person name="Lin L.-C."/>
            <person name="Putnam F.W."/>
        </authorList>
    </citation>
    <scope>PROTEIN SEQUENCE OF 158-383</scope>
</reference>
<reference key="8">
    <citation type="journal article" date="1981" name="Proc. Natl. Acad. Sci. U.S.A.">
        <title>Complete amino acid sequence of the Fc region of a human delta chain.</title>
        <authorList>
            <person name="Shinoda T."/>
            <person name="Takahashi N."/>
            <person name="Takayasu T."/>
            <person name="Okuyama T."/>
            <person name="Shimizu A."/>
        </authorList>
    </citation>
    <scope>PROTEIN SEQUENCE OF 158-383</scope>
</reference>
<reference key="9">
    <citation type="journal article" date="1980" name="Biochem. Biophys. Res. Commun.">
        <title>Amino acid sequence and location of the three glycopeptides in the Fc region of human immunoglobulin D.</title>
        <authorList>
            <person name="Takayasu T."/>
            <person name="Takahashi N."/>
            <person name="Shinoda T."/>
        </authorList>
    </citation>
    <scope>GLYCOSYLATION AT ASN-225; ASN-316 AND ASN-367</scope>
</reference>
<reference key="10">
    <citation type="journal article" date="1983" name="J. Biol. Chem.">
        <title>Structures of the O-glycosidically linked oligosaccharides of human IgD.</title>
        <authorList>
            <person name="Mellis S.J."/>
            <person name="Baenziger J.U."/>
        </authorList>
    </citation>
    <scope>GLYCOSYLATION AT SER-109; THR-126; THR-127; THR-131; THR-132; ASN-225; ASN-316 AND ASN-367</scope>
</reference>
<reference key="11">
    <citation type="journal article" date="1996" name="Immunology">
        <title>Immunoglobulin D enhances the release of tumor necrosis factor-alpha, and interleukin-1 beta as well as interleukin-1 receptor antagonist from human mononuclear cells.</title>
        <authorList>
            <person name="Drenth J.P."/>
            <person name="Goertz J."/>
            <person name="Daha M.R."/>
            <person name="van der Meer J.W."/>
        </authorList>
    </citation>
    <scope>FUNCTION</scope>
</reference>
<reference key="12">
    <citation type="journal article" date="2000" name="Clin. Diagn. Lab. Immunol.">
        <title>Immunoglobulin D: properties, measurement, and clinical relevance.</title>
        <authorList>
            <person name="Vladutiu A.O."/>
        </authorList>
    </citation>
    <scope>REVIEW</scope>
</reference>
<reference key="13">
    <citation type="journal article" date="2000" name="Mol. Immunol.">
        <title>Structural and functional properties of membrane and secreted IgD.</title>
        <authorList>
            <person name="Preud'homme J.L."/>
            <person name="Petit I."/>
            <person name="Barra A."/>
            <person name="Morel F."/>
            <person name="Lecron J.C."/>
            <person name="Lelievre E."/>
        </authorList>
    </citation>
    <scope>REVIEW</scope>
</reference>
<reference key="14">
    <citation type="journal article" date="2001" name="Exp. Clin. Immunogenet.">
        <title>Nomenclature of the human immunoglobulin heavy (IGH) genes.</title>
        <authorList>
            <person name="Lefranc M.P."/>
        </authorList>
    </citation>
    <scope>NOMENCLATURE</scope>
</reference>
<reference key="15">
    <citation type="book" date="2001" name="The Immunoglobulin FactsBook.">
        <title>The Immunoglobulin FactsBook.</title>
        <editorList>
            <person name="Lefranc M.P."/>
            <person name="Lefranc G."/>
        </editorList>
        <authorList>
            <person name="Lefranc M.P."/>
            <person name="Lefranc G."/>
        </authorList>
    </citation>
    <scope>NOMENCLATURE</scope>
</reference>
<reference key="16">
    <citation type="journal article" date="2005" name="J. Proteome Res.">
        <title>Human plasma N-glycoproteome analysis by immunoaffinity subtraction, hydrazide chemistry, and mass spectrometry.</title>
        <authorList>
            <person name="Liu T."/>
            <person name="Qian W.-J."/>
            <person name="Gritsenko M.A."/>
            <person name="Camp D.G. II"/>
            <person name="Monroe M.E."/>
            <person name="Moore R.J."/>
            <person name="Smith R.D."/>
        </authorList>
    </citation>
    <scope>GLYCOSYLATION [LARGE SCALE ANALYSIS] AT ASN-225 AND ASN-316</scope>
    <source>
        <tissue>Plasma</tissue>
    </source>
</reference>
<reference key="17">
    <citation type="journal article" date="2006" name="Immunology">
        <title>The riddle of the dual expression of IgM and IgD.</title>
        <authorList>
            <person name="Geisberger R."/>
            <person name="Lamers M."/>
            <person name="Achatz G."/>
        </authorList>
    </citation>
    <scope>REVIEW</scope>
</reference>
<reference key="18">
    <citation type="journal article" date="2007" name="Annu. Rev. Genet.">
        <title>Immunoglobulin somatic hypermutation.</title>
        <authorList>
            <person name="Teng G."/>
            <person name="Papavasiliou F.N."/>
        </authorList>
    </citation>
    <scope>REVIEW ON SOMATIC HYPERMUTATION</scope>
</reference>
<reference key="19">
    <citation type="journal article" date="2009" name="J. Proteome Res.">
        <title>Glycoproteomics analysis of human liver tissue by combination of multiple enzyme digestion and hydrazide chemistry.</title>
        <authorList>
            <person name="Chen R."/>
            <person name="Jiang X."/>
            <person name="Sun D."/>
            <person name="Han G."/>
            <person name="Wang F."/>
            <person name="Ye M."/>
            <person name="Wang L."/>
            <person name="Zou H."/>
        </authorList>
    </citation>
    <scope>GLYCOSYLATION [LARGE SCALE ANALYSIS] AT ASN-316</scope>
    <source>
        <tissue>Liver</tissue>
    </source>
</reference>
<reference key="20">
    <citation type="journal article" date="2010" name="J. Allergy Clin. Immunol.">
        <title>Structure and function of immunoglobulins.</title>
        <authorList>
            <person name="Schroeder H.W. Jr."/>
            <person name="Cavacini L."/>
        </authorList>
    </citation>
    <scope>REVIEW ON IMMUNOGLOBULINS</scope>
</reference>
<reference key="21">
    <citation type="journal article" date="2012" name="Nat. Rev. Immunol.">
        <title>Molecular programming of B cell memory.</title>
        <authorList>
            <person name="McHeyzer-Williams M."/>
            <person name="Okitsu S."/>
            <person name="Wang N."/>
            <person name="McHeyzer-Williams L."/>
        </authorList>
    </citation>
    <scope>REVIEW ON FUNCTION</scope>
</reference>
<keyword id="KW-0002">3D-structure</keyword>
<keyword id="KW-1064">Adaptive immunity</keyword>
<keyword id="KW-0025">Alternative splicing</keyword>
<keyword id="KW-1003">Cell membrane</keyword>
<keyword id="KW-0903">Direct protein sequencing</keyword>
<keyword id="KW-1015">Disulfide bond</keyword>
<keyword id="KW-0325">Glycoprotein</keyword>
<keyword id="KW-0391">Immunity</keyword>
<keyword id="KW-1280">Immunoglobulin</keyword>
<keyword id="KW-0393">Immunoglobulin domain</keyword>
<keyword id="KW-0472">Membrane</keyword>
<keyword id="KW-1267">Proteomics identification</keyword>
<keyword id="KW-1185">Reference proteome</keyword>
<keyword id="KW-0964">Secreted</keyword>
<keyword id="KW-0812">Transmembrane</keyword>
<keyword id="KW-1133">Transmembrane helix</keyword>
<sequence>APTKAPDVFPIISGCRHPKDNSPVVLACLITGYHPTSVTVTWYMGTQSQPQRTFPEIQRRDSYYMTSSQLSTPLQQWRQGEYKCVVQHTASKSKKEIFRWPESPKAQASSVPTAQPQAEGSLAKATTAPATTRNTGRGGEEKKKEKEKEEQEERETKTPECPSHTQPLGVYLLTPAVQDLWLRDKATFTCFVVGSDLKDAHLTWEVAGKVPTGGVEEGLLERHSNGSQSQHSRLTLPRSLWNAGTSVTCTLNHPSLPPQRLMALREPAAQAPVKLSLNLLASSDPPEAASWLLCEVSGFSPPNILLMWLEDQREVNTSGFAPARPPPQPRSTTFWAWSVLRVPAPPSPQPATYTCVVSHEDSRTLLNASRSLEVSYLAMTPLIPQSKDENSDDYTTFDDVGSLWTTLSTFVALFILTLLYSGIVTFIKVK</sequence>
<comment type="function">
    <text evidence="11 12 13 15 16 17">Constant region of immunoglobulin heavy chains. Immunoglobulins, also known as antibodies, are membrane-bound or secreted glycoproteins produced by B lymphocytes. In the recognition phase of humoral immunity, the membrane-bound immunoglobulins serve as receptors which, upon binding of a specific antigen, trigger the clonal expansion and differentiation of B lymphocytes into immunoglobulins-secreting plasma cells. Secreted immunoglobulins mediate the effector phase of humoral immunity, which results in the elimination of bound antigens (PubMed:20176268, PubMed:22158414). The antigen binding site is formed by the variable domain of one heavy chain, together with that of its associated light chain. Thus, each immunoglobulin has two antigen binding sites with remarkable affinity for a particular antigen. The variable domains are assembled by a process called V-(D)-J rearrangement and can then be subjected to somatic hypermutations which, after exposure to antigen and selection, allow affinity maturation for a particular antigen (PubMed:17576170, PubMed:20176268). IgD is the major antigen receptor isotype on the surface of most peripheral B-cells, where it is coexpressed with IgM. The membrane-bound IgD (mIgD) induces the phosphorylation of CD79A and CD79B by the Src family of protein tyrosine kinases. Soluble IgD (sIgD) concentration in serum below those of IgG, IgA, and IgM but much higher than that of IgE. IgM and IgD molecules present on B cells have identical V regions and antigen-binding sites. After the antigen binds to the B-cell receptor, the secreted form sIgD is shut off. IgD is a potent inducer of TNF, IL1B, and IL1RN. IgD also induces release of IL6, IL10, and LIF from peripheral blood mononuclear cells. Monocytes seem to be the main producers of cytokines in vitro in the presence of IgD (PubMed:10702483, PubMed:11282392, PubMed:8774350).</text>
</comment>
<comment type="subunit">
    <text evidence="13 16">Immunoglobulins are composed of two identical heavy chains and two identical light chains; disulfide-linked (PubMed:20176268). An IgD molecule contains thus a delta heavy chain combined with either a kappa or a lambda light chains. Kappa light chains are found predominantly on the membrane IgD (mIgD) form and lambda on the secreted IgD (sIgD) form, this fact is poorly understood. Membrane-bound IgD molecules are non-covalently associated with a heterodimer of CD79A and CD79B (PubMed:11282392).</text>
</comment>
<comment type="subcellular location">
    <molecule>Isoform 1</molecule>
    <subcellularLocation>
        <location evidence="13">Secreted</location>
    </subcellularLocation>
</comment>
<comment type="subcellular location">
    <molecule>Isoform 2</molecule>
    <subcellularLocation>
        <location>Cell membrane</location>
        <topology evidence="13">Single-pass type I membrane protein</topology>
    </subcellularLocation>
</comment>
<comment type="alternative products">
    <event type="alternative splicing"/>
    <isoform>
        <id>P01880-2</id>
        <name>2</name>
        <name>Membrane-bound</name>
        <name evidence="13">mIgD</name>
        <sequence type="displayed"/>
    </isoform>
    <isoform>
        <id>P01880-1</id>
        <name>1</name>
        <name>Secreted</name>
        <name evidence="13">sIgD</name>
        <sequence type="described" ref="VSP_061837"/>
    </isoform>
</comment>
<comment type="polymorphism">
    <text evidence="19">There are several alleles. The sequence shown is that of IMGT allele IGHD*02.</text>
</comment>
<comment type="miscellaneous">
    <text>IgD is not present in every species and this does not relate to phylogeny and evolution. IgD is present in primates, dog, mouse and rat whereas it is undetectable in rabbit, guinea pig, swine, cattle, sheep and Xenopus.</text>
</comment>
<comment type="caution">
    <text evidence="19">For an example of a full-length immunoglobulin delta heavy chain see AC P0DOX3.</text>
</comment>
<dbReference type="EMBL" id="K02880">
    <property type="protein sequence ID" value="AAA52770.1"/>
    <property type="molecule type" value="Genomic_DNA"/>
</dbReference>
<dbReference type="EMBL" id="K02875">
    <property type="protein sequence ID" value="AAA52770.1"/>
    <property type="status" value="JOINED"/>
    <property type="molecule type" value="Genomic_DNA"/>
</dbReference>
<dbReference type="EMBL" id="K02876">
    <property type="protein sequence ID" value="AAA52770.1"/>
    <property type="status" value="JOINED"/>
    <property type="molecule type" value="Genomic_DNA"/>
</dbReference>
<dbReference type="EMBL" id="K02877">
    <property type="protein sequence ID" value="AAA52770.1"/>
    <property type="status" value="JOINED"/>
    <property type="molecule type" value="Genomic_DNA"/>
</dbReference>
<dbReference type="EMBL" id="K02878">
    <property type="protein sequence ID" value="AAA52770.1"/>
    <property type="status" value="JOINED"/>
    <property type="molecule type" value="Genomic_DNA"/>
</dbReference>
<dbReference type="EMBL" id="K02879">
    <property type="protein sequence ID" value="AAA52770.1"/>
    <property type="status" value="JOINED"/>
    <property type="molecule type" value="Genomic_DNA"/>
</dbReference>
<dbReference type="EMBL" id="X57331">
    <property type="status" value="NOT_ANNOTATED_CDS"/>
    <property type="molecule type" value="Genomic_DNA"/>
</dbReference>
<dbReference type="EMBL" id="AC246787">
    <property type="status" value="NOT_ANNOTATED_CDS"/>
    <property type="molecule type" value="Genomic_DNA"/>
</dbReference>
<dbReference type="EMBL" id="BC021276">
    <property type="status" value="NOT_ANNOTATED_CDS"/>
    <property type="molecule type" value="mRNA"/>
</dbReference>
<dbReference type="EMBL" id="BC063384">
    <property type="status" value="NOT_ANNOTATED_CDS"/>
    <property type="molecule type" value="mRNA"/>
</dbReference>
<dbReference type="PIR" id="A02175">
    <property type="entry name" value="DHHU"/>
</dbReference>
<dbReference type="PIR" id="S21205">
    <property type="entry name" value="S21205"/>
</dbReference>
<dbReference type="PIR" id="S30532">
    <property type="entry name" value="S30532"/>
</dbReference>
<dbReference type="PDB" id="1ZVO">
    <property type="method" value="X-ray"/>
    <property type="chains" value="C/D=1-383"/>
</dbReference>
<dbReference type="PDB" id="9FMB">
    <property type="method" value="X-ray"/>
    <property type="resolution" value="3.00 A"/>
    <property type="chains" value="A/B/C/D=157-377"/>
</dbReference>
<dbReference type="PDBsum" id="1ZVO"/>
<dbReference type="PDBsum" id="9FMB"/>
<dbReference type="SMR" id="P01880"/>
<dbReference type="ComplexPortal" id="CPX-6744">
    <property type="entry name" value="IgD - Ig kappa immunoglobulin complex, constant regions"/>
</dbReference>
<dbReference type="ComplexPortal" id="CPX-6906">
    <property type="entry name" value="IgD - Ig lambda 1 immunoglobulin complex, constant regions"/>
</dbReference>
<dbReference type="ComplexPortal" id="CPX-6907">
    <property type="entry name" value="IgD - Ig lambda 2 immunoglobulin complex, constant regions"/>
</dbReference>
<dbReference type="ComplexPortal" id="CPX-6908">
    <property type="entry name" value="IgD - Ig lambda 3 immunoglobulin complex, constant regions"/>
</dbReference>
<dbReference type="ComplexPortal" id="CPX-6909">
    <property type="entry name" value="IgD - Ig lambda 6 immunoglobulin complex, constant regions"/>
</dbReference>
<dbReference type="ComplexPortal" id="CPX-6910">
    <property type="entry name" value="IgD - Ig lambda 7 immunoglobulin complex, constant regions"/>
</dbReference>
<dbReference type="FunCoup" id="P01880">
    <property type="interactions" value="43"/>
</dbReference>
<dbReference type="IntAct" id="P01880">
    <property type="interactions" value="29"/>
</dbReference>
<dbReference type="STRING" id="9606.ENSP00000478893"/>
<dbReference type="IMGT_GENE-DB" id="IGHD"/>
<dbReference type="GlyConnect" id="1943">
    <property type="glycosylation" value="93 N-Linked glycans (3 sites), 4 O-Linked glycans (5 sites)"/>
</dbReference>
<dbReference type="GlyConnect" id="2968">
    <property type="glycosylation" value="25 N-Linked glycans"/>
</dbReference>
<dbReference type="GlyConnect" id="2969">
    <property type="glycosylation" value="23 N-Linked glycans"/>
</dbReference>
<dbReference type="GlyCosmos" id="P01880">
    <property type="glycosylation" value="11 sites, 102 glycans"/>
</dbReference>
<dbReference type="GlyGen" id="P01880">
    <property type="glycosylation" value="12 sites, 45 N-linked glycans (2 sites), 9 O-linked glycans (3 sites)"/>
</dbReference>
<dbReference type="iPTMnet" id="P01880"/>
<dbReference type="PhosphoSitePlus" id="P01880"/>
<dbReference type="BioMuta" id="IGHD"/>
<dbReference type="DMDM" id="193806360"/>
<dbReference type="MassIVE" id="P01880"/>
<dbReference type="PeptideAtlas" id="P01880"/>
<dbReference type="ProteomicsDB" id="51502">
    <molecule id="P01880-1"/>
</dbReference>
<dbReference type="ProteomicsDB" id="51503">
    <molecule id="P01880-2"/>
</dbReference>
<dbReference type="UCSC" id="uc059gdo.1">
    <property type="organism name" value="human"/>
</dbReference>
<dbReference type="AGR" id="HGNC:5480"/>
<dbReference type="GeneCards" id="IGHD"/>
<dbReference type="HGNC" id="HGNC:5480">
    <property type="gene designation" value="IGHD"/>
</dbReference>
<dbReference type="MalaCards" id="IGHD"/>
<dbReference type="MIM" id="147170">
    <property type="type" value="gene"/>
</dbReference>
<dbReference type="neXtProt" id="NX_P01880"/>
<dbReference type="VEuPathDB" id="HostDB:ENSG00000211898"/>
<dbReference type="InParanoid" id="P01880"/>
<dbReference type="PAN-GO" id="P01880">
    <property type="GO annotations" value="11 GO annotations based on evolutionary models"/>
</dbReference>
<dbReference type="PhylomeDB" id="P01880"/>
<dbReference type="PathwayCommons" id="P01880"/>
<dbReference type="Reactome" id="R-HSA-5690714">
    <property type="pathway name" value="CD22 mediated BCR regulation"/>
</dbReference>
<dbReference type="Reactome" id="R-HSA-9679191">
    <property type="pathway name" value="Potential therapeutics for SARS"/>
</dbReference>
<dbReference type="Reactome" id="R-HSA-983695">
    <property type="pathway name" value="Antigen activates B Cell Receptor (BCR) leading to generation of second messengers"/>
</dbReference>
<dbReference type="SignaLink" id="P01880"/>
<dbReference type="SIGNOR" id="P01880"/>
<dbReference type="ChiTaRS" id="IGHD">
    <property type="organism name" value="human"/>
</dbReference>
<dbReference type="Pharos" id="P01880">
    <property type="development level" value="Tdark"/>
</dbReference>
<dbReference type="PRO" id="PR:P01880"/>
<dbReference type="Proteomes" id="UP000005640">
    <property type="component" value="Chromosome 14"/>
</dbReference>
<dbReference type="RNAct" id="P01880">
    <property type="molecule type" value="protein"/>
</dbReference>
<dbReference type="GO" id="GO:0072562">
    <property type="term" value="C:blood microparticle"/>
    <property type="evidence" value="ECO:0007005"/>
    <property type="project" value="UniProtKB"/>
</dbReference>
<dbReference type="GO" id="GO:0070062">
    <property type="term" value="C:extracellular exosome"/>
    <property type="evidence" value="ECO:0007005"/>
    <property type="project" value="UniProtKB"/>
</dbReference>
<dbReference type="GO" id="GO:0005615">
    <property type="term" value="C:extracellular space"/>
    <property type="evidence" value="ECO:0000303"/>
    <property type="project" value="ComplexPortal"/>
</dbReference>
<dbReference type="GO" id="GO:0071738">
    <property type="term" value="C:IgD immunoglobulin complex"/>
    <property type="evidence" value="ECO:0000303"/>
    <property type="project" value="ComplexPortal"/>
</dbReference>
<dbReference type="GO" id="GO:0042571">
    <property type="term" value="C:immunoglobulin complex, circulating"/>
    <property type="evidence" value="ECO:0000318"/>
    <property type="project" value="GO_Central"/>
</dbReference>
<dbReference type="GO" id="GO:0005886">
    <property type="term" value="C:plasma membrane"/>
    <property type="evidence" value="ECO:0000304"/>
    <property type="project" value="Reactome"/>
</dbReference>
<dbReference type="GO" id="GO:0003823">
    <property type="term" value="F:antigen binding"/>
    <property type="evidence" value="ECO:0000318"/>
    <property type="project" value="GO_Central"/>
</dbReference>
<dbReference type="GO" id="GO:0034987">
    <property type="term" value="F:immunoglobulin receptor binding"/>
    <property type="evidence" value="ECO:0000318"/>
    <property type="project" value="GO_Central"/>
</dbReference>
<dbReference type="GO" id="GO:0002250">
    <property type="term" value="P:adaptive immune response"/>
    <property type="evidence" value="ECO:0000303"/>
    <property type="project" value="ComplexPortal"/>
</dbReference>
<dbReference type="GO" id="GO:0019731">
    <property type="term" value="P:antibacterial humoral response"/>
    <property type="evidence" value="ECO:0000318"/>
    <property type="project" value="GO_Central"/>
</dbReference>
<dbReference type="GO" id="GO:0050853">
    <property type="term" value="P:B cell receptor signaling pathway"/>
    <property type="evidence" value="ECO:0000303"/>
    <property type="project" value="ComplexPortal"/>
</dbReference>
<dbReference type="GO" id="GO:0006958">
    <property type="term" value="P:complement activation, classical pathway"/>
    <property type="evidence" value="ECO:0000318"/>
    <property type="project" value="GO_Central"/>
</dbReference>
<dbReference type="GO" id="GO:0006955">
    <property type="term" value="P:immune response"/>
    <property type="evidence" value="ECO:0000303"/>
    <property type="project" value="UniProtKB"/>
</dbReference>
<dbReference type="GO" id="GO:0032732">
    <property type="term" value="P:positive regulation of interleukin-1 production"/>
    <property type="evidence" value="ECO:0000314"/>
    <property type="project" value="UniProtKB"/>
</dbReference>
<dbReference type="CDD" id="cd16092">
    <property type="entry name" value="IgC1_CH1_IgD"/>
    <property type="match status" value="1"/>
</dbReference>
<dbReference type="CDD" id="cd16084">
    <property type="entry name" value="IgC1_CH2_IgD"/>
    <property type="match status" value="1"/>
</dbReference>
<dbReference type="CDD" id="cd16094">
    <property type="entry name" value="IgC1_CH3_IgD"/>
    <property type="match status" value="1"/>
</dbReference>
<dbReference type="FunFam" id="2.60.40.10:FF:002428">
    <property type="entry name" value="Immunoglobulin heavy constant delta"/>
    <property type="match status" value="1"/>
</dbReference>
<dbReference type="FunFam" id="2.60.40.10:FF:002802">
    <property type="entry name" value="Immunoglobulin heavy constant delta"/>
    <property type="match status" value="1"/>
</dbReference>
<dbReference type="Gene3D" id="2.60.40.10">
    <property type="entry name" value="Immunoglobulins"/>
    <property type="match status" value="3"/>
</dbReference>
<dbReference type="InterPro" id="IPR007110">
    <property type="entry name" value="Ig-like_dom"/>
</dbReference>
<dbReference type="InterPro" id="IPR036179">
    <property type="entry name" value="Ig-like_dom_sf"/>
</dbReference>
<dbReference type="InterPro" id="IPR013783">
    <property type="entry name" value="Ig-like_fold"/>
</dbReference>
<dbReference type="InterPro" id="IPR003006">
    <property type="entry name" value="Ig/MHC_CS"/>
</dbReference>
<dbReference type="InterPro" id="IPR003597">
    <property type="entry name" value="Ig_C1-set"/>
</dbReference>
<dbReference type="InterPro" id="IPR049351">
    <property type="entry name" value="IgD_del_linker"/>
</dbReference>
<dbReference type="InterPro" id="IPR050380">
    <property type="entry name" value="Immune_Resp_Modulators"/>
</dbReference>
<dbReference type="InterPro" id="IPR013151">
    <property type="entry name" value="Immunoglobulin_dom"/>
</dbReference>
<dbReference type="PANTHER" id="PTHR23411">
    <property type="entry name" value="TAPASIN"/>
    <property type="match status" value="1"/>
</dbReference>
<dbReference type="Pfam" id="PF07654">
    <property type="entry name" value="C1-set"/>
    <property type="match status" value="2"/>
</dbReference>
<dbReference type="Pfam" id="PF00047">
    <property type="entry name" value="ig"/>
    <property type="match status" value="1"/>
</dbReference>
<dbReference type="Pfam" id="PF20838">
    <property type="entry name" value="IgD_del_linker"/>
    <property type="match status" value="1"/>
</dbReference>
<dbReference type="SMART" id="SM00407">
    <property type="entry name" value="IGc1"/>
    <property type="match status" value="3"/>
</dbReference>
<dbReference type="SUPFAM" id="SSF48726">
    <property type="entry name" value="Immunoglobulin"/>
    <property type="match status" value="3"/>
</dbReference>
<dbReference type="PROSITE" id="PS50835">
    <property type="entry name" value="IG_LIKE"/>
    <property type="match status" value="3"/>
</dbReference>
<dbReference type="PROSITE" id="PS00290">
    <property type="entry name" value="IG_MHC"/>
    <property type="match status" value="2"/>
</dbReference>
<protein>
    <recommendedName>
        <fullName evidence="14 18">Immunoglobulin heavy constant delta</fullName>
    </recommendedName>
    <alternativeName>
        <fullName evidence="19">Ig delta chain C region</fullName>
    </alternativeName>
    <alternativeName>
        <fullName evidence="20 22">Ig delta chain C region NIG-65</fullName>
    </alternativeName>
    <alternativeName>
        <fullName evidence="20 21">Ig delta chain C region WAH</fullName>
    </alternativeName>
</protein>
<feature type="chain" id="PRO_0000153570" description="Immunoglobulin heavy constant delta">
    <location>
        <begin position="1" status="less than"/>
        <end position="430"/>
    </location>
</feature>
<feature type="topological domain" description="Extracellular" evidence="19">
    <location>
        <begin position="1"/>
        <end position="406"/>
    </location>
</feature>
<feature type="transmembrane region" description="Helical" evidence="1">
    <location>
        <begin position="407"/>
        <end position="427"/>
    </location>
</feature>
<feature type="topological domain" description="Cytoplasmic" evidence="19">
    <location>
        <begin position="428"/>
        <end position="430"/>
    </location>
</feature>
<feature type="domain" description="Ig-like 1" evidence="2">
    <location>
        <begin position="6"/>
        <end position="98"/>
    </location>
</feature>
<feature type="domain" description="Ig-like 2" evidence="2">
    <location>
        <begin position="175"/>
        <end position="263"/>
    </location>
</feature>
<feature type="domain" description="Ig-like 3" evidence="2">
    <location>
        <begin position="267"/>
        <end position="373"/>
    </location>
</feature>
<feature type="region of interest" description="Disordered" evidence="3">
    <location>
        <begin position="96"/>
        <end position="167"/>
    </location>
</feature>
<feature type="compositionally biased region" description="Polar residues" evidence="3">
    <location>
        <begin position="106"/>
        <end position="118"/>
    </location>
</feature>
<feature type="compositionally biased region" description="Basic and acidic residues" evidence="3">
    <location>
        <begin position="138"/>
        <end position="158"/>
    </location>
</feature>
<feature type="glycosylation site" description="O-linked (GalNAc...) serine" evidence="6 10">
    <location>
        <position position="109"/>
    </location>
</feature>
<feature type="glycosylation site" description="O-linked (GalNAc...) serine" evidence="10">
    <location>
        <position position="110"/>
    </location>
</feature>
<feature type="glycosylation site" description="O-linked (GalNAc...) threonine" evidence="10">
    <location>
        <position position="113"/>
    </location>
</feature>
<feature type="glycosylation site" description="O-linked (GalNAc...) threonine" evidence="6 10">
    <location>
        <position position="126"/>
    </location>
</feature>
<feature type="glycosylation site" description="O-linked (GalNAc...) threonine" evidence="6 10">
    <location>
        <position position="127"/>
    </location>
</feature>
<feature type="glycosylation site" description="O-linked (GalNAc...) threonine" evidence="6 10">
    <location>
        <position position="131"/>
    </location>
</feature>
<feature type="glycosylation site" description="O-linked (GalNAc...) threonine" evidence="6 10">
    <location>
        <position position="132"/>
    </location>
</feature>
<feature type="glycosylation site" description="N-linked (GlcNAc...) asparagine" evidence="4 6 7 9">
    <location>
        <position position="225"/>
    </location>
</feature>
<feature type="glycosylation site" description="N-linked (GlcNAc...) asparagine" evidence="4 5 6 7 9">
    <location>
        <position position="316"/>
    </location>
</feature>
<feature type="glycosylation site" description="N-linked (GlcNAc...) asparagine" evidence="6 7 9">
    <location>
        <position position="367"/>
    </location>
</feature>
<feature type="disulfide bond" description="Interchain (with light chain)" evidence="2 8">
    <location>
        <position position="15"/>
    </location>
</feature>
<feature type="disulfide bond" evidence="2 8">
    <location>
        <begin position="28"/>
        <end position="84"/>
    </location>
</feature>
<feature type="disulfide bond" description="Interchain (with heavy chain)" evidence="8">
    <location>
        <position position="161"/>
    </location>
</feature>
<feature type="disulfide bond" evidence="2">
    <location>
        <begin position="190"/>
        <end position="249"/>
    </location>
</feature>
<feature type="disulfide bond" evidence="2">
    <location>
        <begin position="294"/>
        <end position="355"/>
    </location>
</feature>
<feature type="splice variant" id="VSP_061837" description="In isoform 1.">
    <original>LAMTPLIPQSKDENSDDYTTFDDVGSLWTTLSTFVALFILTLLYSGIVTFIKVK</original>
    <variation>VTDHGPMK</variation>
    <location>
        <begin position="377"/>
        <end position="430"/>
    </location>
</feature>
<feature type="sequence conflict" description="In Ref. 4; BC063384." evidence="19" ref="4">
    <original>V</original>
    <variation>I</variation>
    <location>
        <position position="247"/>
    </location>
</feature>
<feature type="sequence conflict" description="In Ref. 7; AA sequence and 8; AA sequence." ref="7 8">
    <original>R</original>
    <variation>G</variation>
    <location>
        <position position="330"/>
    </location>
</feature>
<feature type="non-terminal residue">
    <location>
        <position position="1"/>
    </location>
</feature>
<feature type="strand" evidence="23">
    <location>
        <begin position="168"/>
        <end position="173"/>
    </location>
</feature>
<feature type="helix" evidence="23">
    <location>
        <begin position="177"/>
        <end position="182"/>
    </location>
</feature>
<feature type="strand" evidence="23">
    <location>
        <begin position="183"/>
        <end position="195"/>
    </location>
</feature>
<feature type="strand" evidence="23">
    <location>
        <begin position="201"/>
        <end position="206"/>
    </location>
</feature>
<feature type="strand" evidence="23">
    <location>
        <begin position="215"/>
        <end position="217"/>
    </location>
</feature>
<feature type="strand" evidence="23">
    <location>
        <begin position="228"/>
        <end position="237"/>
    </location>
</feature>
<feature type="helix" evidence="23">
    <location>
        <begin position="238"/>
        <end position="242"/>
    </location>
</feature>
<feature type="strand" evidence="23">
    <location>
        <begin position="247"/>
        <end position="253"/>
    </location>
</feature>
<feature type="strand" evidence="23">
    <location>
        <begin position="256"/>
        <end position="263"/>
    </location>
</feature>
<feature type="strand" evidence="23">
    <location>
        <begin position="274"/>
        <end position="281"/>
    </location>
</feature>
<feature type="strand" evidence="23">
    <location>
        <begin position="290"/>
        <end position="301"/>
    </location>
</feature>
<feature type="strand" evidence="23">
    <location>
        <begin position="304"/>
        <end position="315"/>
    </location>
</feature>
<feature type="strand" evidence="23">
    <location>
        <begin position="318"/>
        <end position="324"/>
    </location>
</feature>
<feature type="strand" evidence="23">
    <location>
        <begin position="334"/>
        <end position="342"/>
    </location>
</feature>
<feature type="strand" evidence="23">
    <location>
        <begin position="351"/>
        <end position="359"/>
    </location>
</feature>
<feature type="turn" evidence="23">
    <location>
        <begin position="360"/>
        <end position="363"/>
    </location>
</feature>
<feature type="strand" evidence="23">
    <location>
        <begin position="364"/>
        <end position="372"/>
    </location>
</feature>
<accession>P01880</accession>
<accession>A0A087WUS7</accession>
<accession>Q6P4I8</accession>
<accession>Q8WU38</accession>
<proteinExistence type="evidence at protein level"/>
<organism>
    <name type="scientific">Homo sapiens</name>
    <name type="common">Human</name>
    <dbReference type="NCBI Taxonomy" id="9606"/>
    <lineage>
        <taxon>Eukaryota</taxon>
        <taxon>Metazoa</taxon>
        <taxon>Chordata</taxon>
        <taxon>Craniata</taxon>
        <taxon>Vertebrata</taxon>
        <taxon>Euteleostomi</taxon>
        <taxon>Mammalia</taxon>
        <taxon>Eutheria</taxon>
        <taxon>Euarchontoglires</taxon>
        <taxon>Primates</taxon>
        <taxon>Haplorrhini</taxon>
        <taxon>Catarrhini</taxon>
        <taxon>Hominidae</taxon>
        <taxon>Homo</taxon>
    </lineage>
</organism>
<gene>
    <name evidence="14 18" type="primary">IGHD</name>
</gene>
<evidence type="ECO:0000255" key="1"/>
<evidence type="ECO:0000255" key="2">
    <source>
        <dbReference type="PROSITE-ProRule" id="PRU00114"/>
    </source>
</evidence>
<evidence type="ECO:0000256" key="3">
    <source>
        <dbReference type="SAM" id="MobiDB-lite"/>
    </source>
</evidence>
<evidence type="ECO:0000269" key="4">
    <source>
    </source>
</evidence>
<evidence type="ECO:0000269" key="5">
    <source>
    </source>
</evidence>
<evidence type="ECO:0000269" key="6">
    <source>
    </source>
</evidence>
<evidence type="ECO:0000269" key="7">
    <source>
    </source>
</evidence>
<evidence type="ECO:0000269" key="8">
    <source>
    </source>
</evidence>
<evidence type="ECO:0000269" key="9">
    <source>
    </source>
</evidence>
<evidence type="ECO:0000269" key="10">
    <source>
    </source>
</evidence>
<evidence type="ECO:0000269" key="11">
    <source>
    </source>
</evidence>
<evidence type="ECO:0000303" key="12">
    <source>
    </source>
</evidence>
<evidence type="ECO:0000303" key="13">
    <source>
    </source>
</evidence>
<evidence type="ECO:0000303" key="14">
    <source>
    </source>
</evidence>
<evidence type="ECO:0000303" key="15">
    <source>
    </source>
</evidence>
<evidence type="ECO:0000303" key="16">
    <source>
    </source>
</evidence>
<evidence type="ECO:0000303" key="17">
    <source>
    </source>
</evidence>
<evidence type="ECO:0000303" key="18">
    <source ref="15"/>
</evidence>
<evidence type="ECO:0000305" key="19"/>
<evidence type="ECO:0000305" key="20">
    <source>
    </source>
</evidence>
<evidence type="ECO:0000305" key="21">
    <source>
    </source>
</evidence>
<evidence type="ECO:0000305" key="22">
    <source>
    </source>
</evidence>
<evidence type="ECO:0007829" key="23">
    <source>
        <dbReference type="PDB" id="9FMB"/>
    </source>
</evidence>